<reference key="1">
    <citation type="journal article" date="2009" name="J. Bacteriol.">
        <title>Genome sequences of three Agrobacterium biovars help elucidate the evolution of multichromosome genomes in bacteria.</title>
        <authorList>
            <person name="Slater S.C."/>
            <person name="Goldman B.S."/>
            <person name="Goodner B."/>
            <person name="Setubal J.C."/>
            <person name="Farrand S.K."/>
            <person name="Nester E.W."/>
            <person name="Burr T.J."/>
            <person name="Banta L."/>
            <person name="Dickerman A.W."/>
            <person name="Paulsen I."/>
            <person name="Otten L."/>
            <person name="Suen G."/>
            <person name="Welch R."/>
            <person name="Almeida N.F."/>
            <person name="Arnold F."/>
            <person name="Burton O.T."/>
            <person name="Du Z."/>
            <person name="Ewing A."/>
            <person name="Godsy E."/>
            <person name="Heisel S."/>
            <person name="Houmiel K.L."/>
            <person name="Jhaveri J."/>
            <person name="Lu J."/>
            <person name="Miller N.M."/>
            <person name="Norton S."/>
            <person name="Chen Q."/>
            <person name="Phoolcharoen W."/>
            <person name="Ohlin V."/>
            <person name="Ondrusek D."/>
            <person name="Pride N."/>
            <person name="Stricklin S.L."/>
            <person name="Sun J."/>
            <person name="Wheeler C."/>
            <person name="Wilson L."/>
            <person name="Zhu H."/>
            <person name="Wood D.W."/>
        </authorList>
    </citation>
    <scope>NUCLEOTIDE SEQUENCE [LARGE SCALE GENOMIC DNA]</scope>
    <source>
        <strain>ATCC BAA-846 / DSM 112012 / S4</strain>
    </source>
</reference>
<sequence length="512" mass="53237">MTITLHPGSVPLADLAKIYWHGEPAVLDRSFDAGIERAAARIAAIAAGNEPVYGVNTGFGKLASIKIDAADTATLQRNLILSHCCGVGAPLAENIVRLILSLKLISLGRGASGVRLDLVRLIEAMLEKGVIPLIPEKGSVGASGDLAPLAHMAAVMMGEAEAFYQGEKLPGRIALERAGLTPVILAAKEGLALINGTQASTALALAGLFRAHRAAQAALITGAMSTDAAMGSSAPFTADIHTLRGHKGQIDTAASLRALLEGSVIRQSHLDGDERVQDPYCIRCQPQVDGACLDLLRMTARTLEIEANAVTDNPLVLSDDSVVSGGNFHAEPVAFAADQIAIAVCEIGAIAQRRIALLVDPTLSYGLPAFLAKKPGLNSGLMIAEVTSAALMSENKQMAHPASVDSTPTSANQEDHVSMACHGARRLLQMTENLFAIIGIEALTAAQGVEFRAPLTTSPELQKAMETLRAVVPTLEEDRFMAPDLAAASALVADGSLVGSVSSGILPGLEGF</sequence>
<feature type="chain" id="PRO_1000125085" description="Histidine ammonia-lyase">
    <location>
        <begin position="1"/>
        <end position="512"/>
    </location>
</feature>
<feature type="modified residue" description="2,3-didehydroalanine (Ser)" evidence="1">
    <location>
        <position position="143"/>
    </location>
</feature>
<feature type="cross-link" description="5-imidazolinone (Ala-Gly)" evidence="1">
    <location>
        <begin position="142"/>
        <end position="144"/>
    </location>
</feature>
<comment type="catalytic activity">
    <reaction evidence="1">
        <text>L-histidine = trans-urocanate + NH4(+)</text>
        <dbReference type="Rhea" id="RHEA:21232"/>
        <dbReference type="ChEBI" id="CHEBI:17771"/>
        <dbReference type="ChEBI" id="CHEBI:28938"/>
        <dbReference type="ChEBI" id="CHEBI:57595"/>
        <dbReference type="EC" id="4.3.1.3"/>
    </reaction>
</comment>
<comment type="pathway">
    <text evidence="1">Amino-acid degradation; L-histidine degradation into L-glutamate; N-formimidoyl-L-glutamate from L-histidine: step 1/3.</text>
</comment>
<comment type="subcellular location">
    <subcellularLocation>
        <location evidence="1">Cytoplasm</location>
    </subcellularLocation>
</comment>
<comment type="PTM">
    <text evidence="1">Contains an active site 4-methylidene-imidazol-5-one (MIO), which is formed autocatalytically by cyclization and dehydration of residues Ala-Ser-Gly.</text>
</comment>
<comment type="similarity">
    <text evidence="1">Belongs to the PAL/histidase family.</text>
</comment>
<evidence type="ECO:0000255" key="1">
    <source>
        <dbReference type="HAMAP-Rule" id="MF_00229"/>
    </source>
</evidence>
<accession>B9K288</accession>
<name>HUTH_ALLAM</name>
<proteinExistence type="inferred from homology"/>
<gene>
    <name evidence="1" type="primary">hutH</name>
    <name type="ordered locus">Avi_5958</name>
</gene>
<keyword id="KW-0963">Cytoplasm</keyword>
<keyword id="KW-0369">Histidine metabolism</keyword>
<keyword id="KW-0456">Lyase</keyword>
<keyword id="KW-1185">Reference proteome</keyword>
<organism>
    <name type="scientific">Allorhizobium ampelinum (strain ATCC BAA-846 / DSM 112012 / S4)</name>
    <name type="common">Agrobacterium vitis (strain S4)</name>
    <dbReference type="NCBI Taxonomy" id="311402"/>
    <lineage>
        <taxon>Bacteria</taxon>
        <taxon>Pseudomonadati</taxon>
        <taxon>Pseudomonadota</taxon>
        <taxon>Alphaproteobacteria</taxon>
        <taxon>Hyphomicrobiales</taxon>
        <taxon>Rhizobiaceae</taxon>
        <taxon>Rhizobium/Agrobacterium group</taxon>
        <taxon>Allorhizobium</taxon>
        <taxon>Allorhizobium ampelinum</taxon>
    </lineage>
</organism>
<dbReference type="EC" id="4.3.1.3" evidence="1"/>
<dbReference type="EMBL" id="CP000634">
    <property type="protein sequence ID" value="ACM38986.1"/>
    <property type="molecule type" value="Genomic_DNA"/>
</dbReference>
<dbReference type="RefSeq" id="WP_012654228.1">
    <property type="nucleotide sequence ID" value="NC_011988.1"/>
</dbReference>
<dbReference type="SMR" id="B9K288"/>
<dbReference type="STRING" id="311402.Avi_5958"/>
<dbReference type="KEGG" id="avi:Avi_5958"/>
<dbReference type="eggNOG" id="COG2986">
    <property type="taxonomic scope" value="Bacteria"/>
</dbReference>
<dbReference type="HOGENOM" id="CLU_014801_4_0_5"/>
<dbReference type="UniPathway" id="UPA00379">
    <property type="reaction ID" value="UER00549"/>
</dbReference>
<dbReference type="Proteomes" id="UP000001596">
    <property type="component" value="Chromosome 2"/>
</dbReference>
<dbReference type="GO" id="GO:0005737">
    <property type="term" value="C:cytoplasm"/>
    <property type="evidence" value="ECO:0007669"/>
    <property type="project" value="UniProtKB-SubCell"/>
</dbReference>
<dbReference type="GO" id="GO:0004397">
    <property type="term" value="F:histidine ammonia-lyase activity"/>
    <property type="evidence" value="ECO:0007669"/>
    <property type="project" value="UniProtKB-UniRule"/>
</dbReference>
<dbReference type="GO" id="GO:0019556">
    <property type="term" value="P:L-histidine catabolic process to glutamate and formamide"/>
    <property type="evidence" value="ECO:0007669"/>
    <property type="project" value="UniProtKB-UniPathway"/>
</dbReference>
<dbReference type="GO" id="GO:0019557">
    <property type="term" value="P:L-histidine catabolic process to glutamate and formate"/>
    <property type="evidence" value="ECO:0007669"/>
    <property type="project" value="UniProtKB-UniPathway"/>
</dbReference>
<dbReference type="CDD" id="cd00332">
    <property type="entry name" value="PAL-HAL"/>
    <property type="match status" value="1"/>
</dbReference>
<dbReference type="FunFam" id="1.10.275.10:FF:000005">
    <property type="entry name" value="Histidine ammonia-lyase"/>
    <property type="match status" value="1"/>
</dbReference>
<dbReference type="FunFam" id="1.20.200.10:FF:000003">
    <property type="entry name" value="Histidine ammonia-lyase"/>
    <property type="match status" value="1"/>
</dbReference>
<dbReference type="Gene3D" id="1.20.200.10">
    <property type="entry name" value="Fumarase/aspartase (Central domain)"/>
    <property type="match status" value="1"/>
</dbReference>
<dbReference type="Gene3D" id="1.10.275.10">
    <property type="entry name" value="Fumarase/aspartase (N-terminal domain)"/>
    <property type="match status" value="1"/>
</dbReference>
<dbReference type="HAMAP" id="MF_00229">
    <property type="entry name" value="His_ammonia_lyase"/>
    <property type="match status" value="1"/>
</dbReference>
<dbReference type="InterPro" id="IPR001106">
    <property type="entry name" value="Aromatic_Lyase"/>
</dbReference>
<dbReference type="InterPro" id="IPR024083">
    <property type="entry name" value="Fumarase/histidase_N"/>
</dbReference>
<dbReference type="InterPro" id="IPR005921">
    <property type="entry name" value="HutH"/>
</dbReference>
<dbReference type="InterPro" id="IPR008948">
    <property type="entry name" value="L-Aspartase-like"/>
</dbReference>
<dbReference type="InterPro" id="IPR022313">
    <property type="entry name" value="Phe/His_NH3-lyase_AS"/>
</dbReference>
<dbReference type="NCBIfam" id="TIGR01225">
    <property type="entry name" value="hutH"/>
    <property type="match status" value="1"/>
</dbReference>
<dbReference type="NCBIfam" id="NF006871">
    <property type="entry name" value="PRK09367.1"/>
    <property type="match status" value="1"/>
</dbReference>
<dbReference type="PANTHER" id="PTHR10362">
    <property type="entry name" value="HISTIDINE AMMONIA-LYASE"/>
    <property type="match status" value="1"/>
</dbReference>
<dbReference type="Pfam" id="PF00221">
    <property type="entry name" value="Lyase_aromatic"/>
    <property type="match status" value="1"/>
</dbReference>
<dbReference type="SUPFAM" id="SSF48557">
    <property type="entry name" value="L-aspartase-like"/>
    <property type="match status" value="1"/>
</dbReference>
<dbReference type="PROSITE" id="PS00488">
    <property type="entry name" value="PAL_HISTIDASE"/>
    <property type="match status" value="1"/>
</dbReference>
<protein>
    <recommendedName>
        <fullName evidence="1">Histidine ammonia-lyase</fullName>
        <shortName evidence="1">Histidase</shortName>
        <ecNumber evidence="1">4.3.1.3</ecNumber>
    </recommendedName>
</protein>